<feature type="signal peptide" evidence="2">
    <location>
        <begin position="1"/>
        <end position="25"/>
    </location>
</feature>
<feature type="chain" id="PRO_0000024885" description="Probable pectate lyase 20">
    <location>
        <begin position="26"/>
        <end position="417"/>
    </location>
</feature>
<feature type="active site" evidence="2">
    <location>
        <position position="295"/>
    </location>
</feature>
<feature type="binding site" evidence="1">
    <location>
        <position position="215"/>
    </location>
    <ligand>
        <name>Ca(2+)</name>
        <dbReference type="ChEBI" id="CHEBI:29108"/>
    </ligand>
</feature>
<feature type="binding site" evidence="1">
    <location>
        <position position="239"/>
    </location>
    <ligand>
        <name>Ca(2+)</name>
        <dbReference type="ChEBI" id="CHEBI:29108"/>
    </ligand>
</feature>
<feature type="binding site" evidence="1">
    <location>
        <position position="243"/>
    </location>
    <ligand>
        <name>Ca(2+)</name>
        <dbReference type="ChEBI" id="CHEBI:29108"/>
    </ligand>
</feature>
<feature type="glycosylation site" description="N-linked (GlcNAc...) asparagine" evidence="2">
    <location>
        <position position="29"/>
    </location>
</feature>
<feature type="glycosylation site" description="N-linked (GlcNAc...) asparagine" evidence="2">
    <location>
        <position position="53"/>
    </location>
</feature>
<reference key="1">
    <citation type="journal article" date="1999" name="DNA Res.">
        <title>Structural analysis of Arabidopsis thaliana chromosome 5. IX. Sequence features of the regions of 1,011,550 bp covered by seventeen P1 and TAC clones.</title>
        <authorList>
            <person name="Kaneko T."/>
            <person name="Katoh T."/>
            <person name="Sato S."/>
            <person name="Nakamura Y."/>
            <person name="Asamizu E."/>
            <person name="Kotani H."/>
            <person name="Miyajima N."/>
            <person name="Tabata S."/>
        </authorList>
    </citation>
    <scope>NUCLEOTIDE SEQUENCE [LARGE SCALE GENOMIC DNA]</scope>
    <source>
        <strain>cv. Columbia</strain>
    </source>
</reference>
<reference key="2">
    <citation type="journal article" date="2017" name="Plant J.">
        <title>Araport11: a complete reannotation of the Arabidopsis thaliana reference genome.</title>
        <authorList>
            <person name="Cheng C.Y."/>
            <person name="Krishnakumar V."/>
            <person name="Chan A.P."/>
            <person name="Thibaud-Nissen F."/>
            <person name="Schobel S."/>
            <person name="Town C.D."/>
        </authorList>
    </citation>
    <scope>GENOME REANNOTATION</scope>
    <source>
        <strain>cv. Columbia</strain>
    </source>
</reference>
<reference key="3">
    <citation type="journal article" date="2003" name="Science">
        <title>Empirical analysis of transcriptional activity in the Arabidopsis genome.</title>
        <authorList>
            <person name="Yamada K."/>
            <person name="Lim J."/>
            <person name="Dale J.M."/>
            <person name="Chen H."/>
            <person name="Shinn P."/>
            <person name="Palm C.J."/>
            <person name="Southwick A.M."/>
            <person name="Wu H.C."/>
            <person name="Kim C.J."/>
            <person name="Nguyen M."/>
            <person name="Pham P.K."/>
            <person name="Cheuk R.F."/>
            <person name="Karlin-Newmann G."/>
            <person name="Liu S.X."/>
            <person name="Lam B."/>
            <person name="Sakano H."/>
            <person name="Wu T."/>
            <person name="Yu G."/>
            <person name="Miranda M."/>
            <person name="Quach H.L."/>
            <person name="Tripp M."/>
            <person name="Chang C.H."/>
            <person name="Lee J.M."/>
            <person name="Toriumi M.J."/>
            <person name="Chan M.M."/>
            <person name="Tang C.C."/>
            <person name="Onodera C.S."/>
            <person name="Deng J.M."/>
            <person name="Akiyama K."/>
            <person name="Ansari Y."/>
            <person name="Arakawa T."/>
            <person name="Banh J."/>
            <person name="Banno F."/>
            <person name="Bowser L."/>
            <person name="Brooks S.Y."/>
            <person name="Carninci P."/>
            <person name="Chao Q."/>
            <person name="Choy N."/>
            <person name="Enju A."/>
            <person name="Goldsmith A.D."/>
            <person name="Gurjal M."/>
            <person name="Hansen N.F."/>
            <person name="Hayashizaki Y."/>
            <person name="Johnson-Hopson C."/>
            <person name="Hsuan V.W."/>
            <person name="Iida K."/>
            <person name="Karnes M."/>
            <person name="Khan S."/>
            <person name="Koesema E."/>
            <person name="Ishida J."/>
            <person name="Jiang P.X."/>
            <person name="Jones T."/>
            <person name="Kawai J."/>
            <person name="Kamiya A."/>
            <person name="Meyers C."/>
            <person name="Nakajima M."/>
            <person name="Narusaka M."/>
            <person name="Seki M."/>
            <person name="Sakurai T."/>
            <person name="Satou M."/>
            <person name="Tamse R."/>
            <person name="Vaysberg M."/>
            <person name="Wallender E.K."/>
            <person name="Wong C."/>
            <person name="Yamamura Y."/>
            <person name="Yuan S."/>
            <person name="Shinozaki K."/>
            <person name="Davis R.W."/>
            <person name="Theologis A."/>
            <person name="Ecker J.R."/>
        </authorList>
    </citation>
    <scope>NUCLEOTIDE SEQUENCE [LARGE SCALE MRNA]</scope>
    <source>
        <strain>cv. Columbia</strain>
    </source>
</reference>
<reference key="4">
    <citation type="submission" date="2002-03" db="EMBL/GenBank/DDBJ databases">
        <title>Full-length cDNA from Arabidopsis thaliana.</title>
        <authorList>
            <person name="Brover V.V."/>
            <person name="Troukhan M.E."/>
            <person name="Alexandrov N.A."/>
            <person name="Lu Y.-P."/>
            <person name="Flavell R.B."/>
            <person name="Feldmann K.A."/>
        </authorList>
    </citation>
    <scope>NUCLEOTIDE SEQUENCE [LARGE SCALE MRNA]</scope>
</reference>
<organism>
    <name type="scientific">Arabidopsis thaliana</name>
    <name type="common">Mouse-ear cress</name>
    <dbReference type="NCBI Taxonomy" id="3702"/>
    <lineage>
        <taxon>Eukaryota</taxon>
        <taxon>Viridiplantae</taxon>
        <taxon>Streptophyta</taxon>
        <taxon>Embryophyta</taxon>
        <taxon>Tracheophyta</taxon>
        <taxon>Spermatophyta</taxon>
        <taxon>Magnoliopsida</taxon>
        <taxon>eudicotyledons</taxon>
        <taxon>Gunneridae</taxon>
        <taxon>Pentapetalae</taxon>
        <taxon>rosids</taxon>
        <taxon>malvids</taxon>
        <taxon>Brassicales</taxon>
        <taxon>Brassicaceae</taxon>
        <taxon>Camelineae</taxon>
        <taxon>Arabidopsis</taxon>
    </lineage>
</organism>
<proteinExistence type="evidence at transcript level"/>
<name>PLY20_ARATH</name>
<sequence length="417" mass="46728">MAVTQILVVFASALLLSMFFTGVDSTRSNETWHEHAVENPEEVAAMVDMSIRNSTARRRLGYFSCSTGNPIDDCWRCDRRWQSRRKHLANCAIGFGRNAIGGRDGRYYVVSDPNDDNPVNPKPGTLRHAVIQEEPLWIVFKRDMVITLKEELIMNSFKTIDGRGVNVHIANGACITIQFVTNIIIHGIHIHDCRPTGNAMVRSSPSHYGWRTMADGDGISIFGSSHIWIDHNSLSNCADGLIDAVMASTAITISNNYFTHHNEVMLLGHSDTYTRDKVMQVTIAYNHFGEGLIQRMPRCRHGYFHVVNNDYTHWEMYAIGGSASPTINSQGNRYLAPRNRFAKEVTKRDYAGQWQWRHWNWRSEGDLFLNGAFFTRSGSGLGASYARASSLAAKSSSLVGVITYNAGALNCRGGRRC</sequence>
<keyword id="KW-0106">Calcium</keyword>
<keyword id="KW-0325">Glycoprotein</keyword>
<keyword id="KW-0456">Lyase</keyword>
<keyword id="KW-0479">Metal-binding</keyword>
<keyword id="KW-1185">Reference proteome</keyword>
<keyword id="KW-0732">Signal</keyword>
<protein>
    <recommendedName>
        <fullName>Probable pectate lyase 20</fullName>
        <ecNumber>4.2.2.2</ecNumber>
    </recommendedName>
</protein>
<gene>
    <name type="ordered locus">At5g48900</name>
    <name type="ORF">K19E20.1</name>
</gene>
<accession>Q93WF1</accession>
<accession>Q8LDB4</accession>
<accession>Q9FI81</accession>
<comment type="catalytic activity">
    <reaction>
        <text>Eliminative cleavage of (1-&gt;4)-alpha-D-galacturonan to give oligosaccharides with 4-deoxy-alpha-D-galact-4-enuronosyl groups at their non-reducing ends.</text>
        <dbReference type="EC" id="4.2.2.2"/>
    </reaction>
</comment>
<comment type="cofactor">
    <cofactor evidence="1">
        <name>Ca(2+)</name>
        <dbReference type="ChEBI" id="CHEBI:29108"/>
    </cofactor>
    <text evidence="1">Binds 1 Ca(2+) ion. Required for its activity.</text>
</comment>
<comment type="pathway">
    <text>Glycan metabolism; pectin degradation; 2-dehydro-3-deoxy-D-gluconate from pectin: step 2/5.</text>
</comment>
<comment type="similarity">
    <text evidence="3">Belongs to the polysaccharide lyase 1 family.</text>
</comment>
<comment type="sequence caution" evidence="3">
    <conflict type="erroneous gene model prediction">
        <sequence resource="EMBL-CDS" id="BAB10313"/>
    </conflict>
</comment>
<evidence type="ECO:0000250" key="1"/>
<evidence type="ECO:0000255" key="2"/>
<evidence type="ECO:0000305" key="3"/>
<dbReference type="EC" id="4.2.2.2"/>
<dbReference type="EMBL" id="AB017061">
    <property type="protein sequence ID" value="BAB10313.1"/>
    <property type="status" value="ALT_SEQ"/>
    <property type="molecule type" value="Genomic_DNA"/>
</dbReference>
<dbReference type="EMBL" id="CP002688">
    <property type="protein sequence ID" value="AED95740.1"/>
    <property type="molecule type" value="Genomic_DNA"/>
</dbReference>
<dbReference type="EMBL" id="AY050795">
    <property type="protein sequence ID" value="AAK92730.1"/>
    <property type="molecule type" value="mRNA"/>
</dbReference>
<dbReference type="EMBL" id="AY050404">
    <property type="protein sequence ID" value="AAK91420.1"/>
    <property type="molecule type" value="mRNA"/>
</dbReference>
<dbReference type="EMBL" id="AY086099">
    <property type="protein sequence ID" value="AAM63307.1"/>
    <property type="molecule type" value="mRNA"/>
</dbReference>
<dbReference type="RefSeq" id="NP_568705.1">
    <property type="nucleotide sequence ID" value="NM_124267.3"/>
</dbReference>
<dbReference type="SMR" id="Q93WF1"/>
<dbReference type="BioGRID" id="20194">
    <property type="interactions" value="1"/>
</dbReference>
<dbReference type="FunCoup" id="Q93WF1">
    <property type="interactions" value="114"/>
</dbReference>
<dbReference type="STRING" id="3702.Q93WF1"/>
<dbReference type="CAZy" id="PL1">
    <property type="family name" value="Polysaccharide Lyase Family 1"/>
</dbReference>
<dbReference type="GlyGen" id="Q93WF1">
    <property type="glycosylation" value="2 sites"/>
</dbReference>
<dbReference type="iPTMnet" id="Q93WF1"/>
<dbReference type="PaxDb" id="3702-AT5G48900.1"/>
<dbReference type="ProteomicsDB" id="235044"/>
<dbReference type="EnsemblPlants" id="AT5G48900.1">
    <property type="protein sequence ID" value="AT5G48900.1"/>
    <property type="gene ID" value="AT5G48900"/>
</dbReference>
<dbReference type="GeneID" id="834948"/>
<dbReference type="Gramene" id="AT5G48900.1">
    <property type="protein sequence ID" value="AT5G48900.1"/>
    <property type="gene ID" value="AT5G48900"/>
</dbReference>
<dbReference type="KEGG" id="ath:AT5G48900"/>
<dbReference type="Araport" id="AT5G48900"/>
<dbReference type="TAIR" id="AT5G48900"/>
<dbReference type="eggNOG" id="ENOG502QQ5F">
    <property type="taxonomic scope" value="Eukaryota"/>
</dbReference>
<dbReference type="HOGENOM" id="CLU_026608_0_1_1"/>
<dbReference type="InParanoid" id="Q93WF1"/>
<dbReference type="OMA" id="QWINEHS"/>
<dbReference type="PhylomeDB" id="Q93WF1"/>
<dbReference type="BioCyc" id="ARA:AT5G48900-MONOMER"/>
<dbReference type="UniPathway" id="UPA00545">
    <property type="reaction ID" value="UER00824"/>
</dbReference>
<dbReference type="PRO" id="PR:Q93WF1"/>
<dbReference type="Proteomes" id="UP000006548">
    <property type="component" value="Chromosome 5"/>
</dbReference>
<dbReference type="ExpressionAtlas" id="Q93WF1">
    <property type="expression patterns" value="baseline and differential"/>
</dbReference>
<dbReference type="GO" id="GO:0046872">
    <property type="term" value="F:metal ion binding"/>
    <property type="evidence" value="ECO:0007669"/>
    <property type="project" value="UniProtKB-KW"/>
</dbReference>
<dbReference type="GO" id="GO:0030570">
    <property type="term" value="F:pectate lyase activity"/>
    <property type="evidence" value="ECO:0007669"/>
    <property type="project" value="UniProtKB-EC"/>
</dbReference>
<dbReference type="GO" id="GO:0045490">
    <property type="term" value="P:pectin catabolic process"/>
    <property type="evidence" value="ECO:0007669"/>
    <property type="project" value="UniProtKB-UniPathway"/>
</dbReference>
<dbReference type="FunFam" id="2.160.20.10:FF:000009">
    <property type="entry name" value="Pectate lyase"/>
    <property type="match status" value="1"/>
</dbReference>
<dbReference type="Gene3D" id="2.160.20.10">
    <property type="entry name" value="Single-stranded right-handed beta-helix, Pectin lyase-like"/>
    <property type="match status" value="1"/>
</dbReference>
<dbReference type="InterPro" id="IPR018082">
    <property type="entry name" value="AmbAllergen"/>
</dbReference>
<dbReference type="InterPro" id="IPR002022">
    <property type="entry name" value="Pec_lyase"/>
</dbReference>
<dbReference type="InterPro" id="IPR012334">
    <property type="entry name" value="Pectin_lyas_fold"/>
</dbReference>
<dbReference type="InterPro" id="IPR011050">
    <property type="entry name" value="Pectin_lyase_fold/virulence"/>
</dbReference>
<dbReference type="InterPro" id="IPR045032">
    <property type="entry name" value="PEL"/>
</dbReference>
<dbReference type="PANTHER" id="PTHR31683">
    <property type="entry name" value="PECTATE LYASE 18-RELATED"/>
    <property type="match status" value="1"/>
</dbReference>
<dbReference type="PANTHER" id="PTHR31683:SF120">
    <property type="entry name" value="PECTATE LYASE 20-RELATED"/>
    <property type="match status" value="1"/>
</dbReference>
<dbReference type="Pfam" id="PF00544">
    <property type="entry name" value="Pectate_lyase_4"/>
    <property type="match status" value="1"/>
</dbReference>
<dbReference type="PRINTS" id="PR00807">
    <property type="entry name" value="AMBALLERGEN"/>
</dbReference>
<dbReference type="SMART" id="SM00656">
    <property type="entry name" value="Amb_all"/>
    <property type="match status" value="1"/>
</dbReference>
<dbReference type="SUPFAM" id="SSF51126">
    <property type="entry name" value="Pectin lyase-like"/>
    <property type="match status" value="1"/>
</dbReference>